<reference key="1">
    <citation type="submission" date="2007-08" db="EMBL/GenBank/DDBJ databases">
        <authorList>
            <consortium name="The Citrobacter koseri Genome Sequencing Project"/>
            <person name="McClelland M."/>
            <person name="Sanderson E.K."/>
            <person name="Porwollik S."/>
            <person name="Spieth J."/>
            <person name="Clifton W.S."/>
            <person name="Latreille P."/>
            <person name="Courtney L."/>
            <person name="Wang C."/>
            <person name="Pepin K."/>
            <person name="Bhonagiri V."/>
            <person name="Nash W."/>
            <person name="Johnson M."/>
            <person name="Thiruvilangam P."/>
            <person name="Wilson R."/>
        </authorList>
    </citation>
    <scope>NUCLEOTIDE SEQUENCE [LARGE SCALE GENOMIC DNA]</scope>
    <source>
        <strain>ATCC BAA-895 / CDC 4225-83 / SGSC4696</strain>
    </source>
</reference>
<comment type="function">
    <text evidence="1">Probably phosphorylates lipids; the in vivo substrate is unknown.</text>
</comment>
<comment type="cofactor">
    <cofactor evidence="1">
        <name>Mg(2+)</name>
        <dbReference type="ChEBI" id="CHEBI:18420"/>
    </cofactor>
    <cofactor evidence="1">
        <name>Ca(2+)</name>
        <dbReference type="ChEBI" id="CHEBI:29108"/>
    </cofactor>
    <text evidence="1">Binds 1 Mg(2+) ion per subunit. Ca(2+) may be able to substitute.</text>
</comment>
<comment type="subcellular location">
    <subcellularLocation>
        <location evidence="1">Cytoplasm</location>
    </subcellularLocation>
</comment>
<comment type="similarity">
    <text evidence="1">Belongs to the diacylglycerol/lipid kinase family. YegS lipid kinase subfamily.</text>
</comment>
<feature type="chain" id="PRO_1000068250" description="Probable lipid kinase YegS-like">
    <location>
        <begin position="1"/>
        <end position="299"/>
    </location>
</feature>
<feature type="domain" description="DAGKc" evidence="1">
    <location>
        <begin position="2"/>
        <end position="133"/>
    </location>
</feature>
<feature type="active site" description="Proton acceptor" evidence="1">
    <location>
        <position position="271"/>
    </location>
</feature>
<feature type="binding site" evidence="1">
    <location>
        <position position="40"/>
    </location>
    <ligand>
        <name>ATP</name>
        <dbReference type="ChEBI" id="CHEBI:30616"/>
    </ligand>
</feature>
<feature type="binding site" evidence="1">
    <location>
        <begin position="66"/>
        <end position="72"/>
    </location>
    <ligand>
        <name>ATP</name>
        <dbReference type="ChEBI" id="CHEBI:30616"/>
    </ligand>
</feature>
<feature type="binding site" evidence="1">
    <location>
        <position position="95"/>
    </location>
    <ligand>
        <name>ATP</name>
        <dbReference type="ChEBI" id="CHEBI:30616"/>
    </ligand>
</feature>
<feature type="binding site" evidence="1">
    <location>
        <position position="215"/>
    </location>
    <ligand>
        <name>Mg(2+)</name>
        <dbReference type="ChEBI" id="CHEBI:18420"/>
    </ligand>
</feature>
<feature type="binding site" evidence="1">
    <location>
        <position position="218"/>
    </location>
    <ligand>
        <name>Mg(2+)</name>
        <dbReference type="ChEBI" id="CHEBI:18420"/>
    </ligand>
</feature>
<feature type="binding site" evidence="1">
    <location>
        <position position="220"/>
    </location>
    <ligand>
        <name>Mg(2+)</name>
        <dbReference type="ChEBI" id="CHEBI:18420"/>
    </ligand>
</feature>
<proteinExistence type="inferred from homology"/>
<sequence>MATFPASLLILNGKGADNQPLRDAIGLLRDEGVEIHVRVTWEKGDAQRYVDEARQLGVETVIAGGGDGTINEVSAALIQCQGGNVPALGILPLGTANDFATSAGIPEALDKALKLAIAGNAVAIDIAQVNDKTCFINMATGGFGTRITTETPEKLKAALGGVSYFIHGLMRMDTLKPDRCEIRGENFHWQGDALVIGIGNGRQAGGGQQLCPGALINDGLLQLRIFTGEELLPALFSTLTQPEENPNIVDGASAWFDIQAPHEITFNLDGEPLSGQEFHIEILPNALRCRLPPDCPLLR</sequence>
<gene>
    <name type="ordered locus">CKO_00697</name>
</gene>
<keyword id="KW-0067">ATP-binding</keyword>
<keyword id="KW-0963">Cytoplasm</keyword>
<keyword id="KW-0418">Kinase</keyword>
<keyword id="KW-0444">Lipid biosynthesis</keyword>
<keyword id="KW-0443">Lipid metabolism</keyword>
<keyword id="KW-0460">Magnesium</keyword>
<keyword id="KW-0479">Metal-binding</keyword>
<keyword id="KW-0547">Nucleotide-binding</keyword>
<keyword id="KW-0594">Phospholipid biosynthesis</keyword>
<keyword id="KW-1208">Phospholipid metabolism</keyword>
<keyword id="KW-1185">Reference proteome</keyword>
<keyword id="KW-0808">Transferase</keyword>
<accession>A8AED8</accession>
<organism>
    <name type="scientific">Citrobacter koseri (strain ATCC BAA-895 / CDC 4225-83 / SGSC4696)</name>
    <dbReference type="NCBI Taxonomy" id="290338"/>
    <lineage>
        <taxon>Bacteria</taxon>
        <taxon>Pseudomonadati</taxon>
        <taxon>Pseudomonadota</taxon>
        <taxon>Gammaproteobacteria</taxon>
        <taxon>Enterobacterales</taxon>
        <taxon>Enterobacteriaceae</taxon>
        <taxon>Citrobacter</taxon>
    </lineage>
</organism>
<name>YEGS_CITK8</name>
<evidence type="ECO:0000255" key="1">
    <source>
        <dbReference type="HAMAP-Rule" id="MF_01377"/>
    </source>
</evidence>
<protein>
    <recommendedName>
        <fullName evidence="1">Probable lipid kinase YegS-like</fullName>
        <ecNumber evidence="1">2.7.1.-</ecNumber>
    </recommendedName>
</protein>
<dbReference type="EC" id="2.7.1.-" evidence="1"/>
<dbReference type="EMBL" id="CP000822">
    <property type="protein sequence ID" value="ABV11851.1"/>
    <property type="molecule type" value="Genomic_DNA"/>
</dbReference>
<dbReference type="SMR" id="A8AED8"/>
<dbReference type="STRING" id="290338.CKO_00697"/>
<dbReference type="GeneID" id="45134914"/>
<dbReference type="KEGG" id="cko:CKO_00697"/>
<dbReference type="HOGENOM" id="CLU_045532_1_1_6"/>
<dbReference type="OrthoDB" id="142078at2"/>
<dbReference type="Proteomes" id="UP000008148">
    <property type="component" value="Chromosome"/>
</dbReference>
<dbReference type="GO" id="GO:0005737">
    <property type="term" value="C:cytoplasm"/>
    <property type="evidence" value="ECO:0007669"/>
    <property type="project" value="UniProtKB-SubCell"/>
</dbReference>
<dbReference type="GO" id="GO:0005886">
    <property type="term" value="C:plasma membrane"/>
    <property type="evidence" value="ECO:0007669"/>
    <property type="project" value="TreeGrafter"/>
</dbReference>
<dbReference type="GO" id="GO:0005524">
    <property type="term" value="F:ATP binding"/>
    <property type="evidence" value="ECO:0007669"/>
    <property type="project" value="UniProtKB-UniRule"/>
</dbReference>
<dbReference type="GO" id="GO:0001727">
    <property type="term" value="F:lipid kinase activity"/>
    <property type="evidence" value="ECO:0007669"/>
    <property type="project" value="UniProtKB-UniRule"/>
</dbReference>
<dbReference type="GO" id="GO:0000287">
    <property type="term" value="F:magnesium ion binding"/>
    <property type="evidence" value="ECO:0007669"/>
    <property type="project" value="UniProtKB-UniRule"/>
</dbReference>
<dbReference type="GO" id="GO:0008654">
    <property type="term" value="P:phospholipid biosynthetic process"/>
    <property type="evidence" value="ECO:0007669"/>
    <property type="project" value="UniProtKB-UniRule"/>
</dbReference>
<dbReference type="FunFam" id="3.40.50.10330:FF:000008">
    <property type="entry name" value="Probable lipid kinase YegS"/>
    <property type="match status" value="1"/>
</dbReference>
<dbReference type="Gene3D" id="2.60.200.40">
    <property type="match status" value="1"/>
</dbReference>
<dbReference type="Gene3D" id="3.40.50.10330">
    <property type="entry name" value="Probable inorganic polyphosphate/atp-NAD kinase, domain 1"/>
    <property type="match status" value="1"/>
</dbReference>
<dbReference type="HAMAP" id="MF_01377">
    <property type="entry name" value="YegS"/>
    <property type="match status" value="1"/>
</dbReference>
<dbReference type="InterPro" id="IPR017438">
    <property type="entry name" value="ATP-NAD_kinase_N"/>
</dbReference>
<dbReference type="InterPro" id="IPR005218">
    <property type="entry name" value="Diacylglycerol/lipid_kinase"/>
</dbReference>
<dbReference type="InterPro" id="IPR001206">
    <property type="entry name" value="Diacylglycerol_kinase_cat_dom"/>
</dbReference>
<dbReference type="InterPro" id="IPR022433">
    <property type="entry name" value="Lip_kinase_YegS"/>
</dbReference>
<dbReference type="InterPro" id="IPR050187">
    <property type="entry name" value="Lipid_Phosphate_FormReg"/>
</dbReference>
<dbReference type="InterPro" id="IPR016064">
    <property type="entry name" value="NAD/diacylglycerol_kinase_sf"/>
</dbReference>
<dbReference type="InterPro" id="IPR045540">
    <property type="entry name" value="YegS/DAGK_C"/>
</dbReference>
<dbReference type="NCBIfam" id="TIGR03702">
    <property type="entry name" value="lip_kinase_YegS"/>
    <property type="match status" value="1"/>
</dbReference>
<dbReference type="NCBIfam" id="NF009602">
    <property type="entry name" value="PRK13054.1"/>
    <property type="match status" value="1"/>
</dbReference>
<dbReference type="NCBIfam" id="TIGR00147">
    <property type="entry name" value="YegS/Rv2252/BmrU family lipid kinase"/>
    <property type="match status" value="1"/>
</dbReference>
<dbReference type="PANTHER" id="PTHR12358:SF106">
    <property type="entry name" value="LIPID KINASE YEGS"/>
    <property type="match status" value="1"/>
</dbReference>
<dbReference type="PANTHER" id="PTHR12358">
    <property type="entry name" value="SPHINGOSINE KINASE"/>
    <property type="match status" value="1"/>
</dbReference>
<dbReference type="Pfam" id="PF00781">
    <property type="entry name" value="DAGK_cat"/>
    <property type="match status" value="1"/>
</dbReference>
<dbReference type="Pfam" id="PF19279">
    <property type="entry name" value="YegS_C"/>
    <property type="match status" value="1"/>
</dbReference>
<dbReference type="SMART" id="SM00046">
    <property type="entry name" value="DAGKc"/>
    <property type="match status" value="1"/>
</dbReference>
<dbReference type="SUPFAM" id="SSF111331">
    <property type="entry name" value="NAD kinase/diacylglycerol kinase-like"/>
    <property type="match status" value="1"/>
</dbReference>
<dbReference type="PROSITE" id="PS50146">
    <property type="entry name" value="DAGK"/>
    <property type="match status" value="1"/>
</dbReference>